<reference key="1">
    <citation type="journal article" date="1997" name="Microbiology">
        <title>A 12kb nucleotide sequence containing the alanine dehydrogenase gene at 279 degree on the Bacillus subtilis chromosome.</title>
        <authorList>
            <person name="Oudega B."/>
            <person name="Vandenbol M."/>
            <person name="Koningstein G."/>
        </authorList>
    </citation>
    <scope>NUCLEOTIDE SEQUENCE [GENOMIC DNA]</scope>
    <source>
        <strain>168</strain>
    </source>
</reference>
<reference key="2">
    <citation type="journal article" date="1997" name="Nature">
        <title>The complete genome sequence of the Gram-positive bacterium Bacillus subtilis.</title>
        <authorList>
            <person name="Kunst F."/>
            <person name="Ogasawara N."/>
            <person name="Moszer I."/>
            <person name="Albertini A.M."/>
            <person name="Alloni G."/>
            <person name="Azevedo V."/>
            <person name="Bertero M.G."/>
            <person name="Bessieres P."/>
            <person name="Bolotin A."/>
            <person name="Borchert S."/>
            <person name="Borriss R."/>
            <person name="Boursier L."/>
            <person name="Brans A."/>
            <person name="Braun M."/>
            <person name="Brignell S.C."/>
            <person name="Bron S."/>
            <person name="Brouillet S."/>
            <person name="Bruschi C.V."/>
            <person name="Caldwell B."/>
            <person name="Capuano V."/>
            <person name="Carter N.M."/>
            <person name="Choi S.-K."/>
            <person name="Codani J.-J."/>
            <person name="Connerton I.F."/>
            <person name="Cummings N.J."/>
            <person name="Daniel R.A."/>
            <person name="Denizot F."/>
            <person name="Devine K.M."/>
            <person name="Duesterhoeft A."/>
            <person name="Ehrlich S.D."/>
            <person name="Emmerson P.T."/>
            <person name="Entian K.-D."/>
            <person name="Errington J."/>
            <person name="Fabret C."/>
            <person name="Ferrari E."/>
            <person name="Foulger D."/>
            <person name="Fritz C."/>
            <person name="Fujita M."/>
            <person name="Fujita Y."/>
            <person name="Fuma S."/>
            <person name="Galizzi A."/>
            <person name="Galleron N."/>
            <person name="Ghim S.-Y."/>
            <person name="Glaser P."/>
            <person name="Goffeau A."/>
            <person name="Golightly E.J."/>
            <person name="Grandi G."/>
            <person name="Guiseppi G."/>
            <person name="Guy B.J."/>
            <person name="Haga K."/>
            <person name="Haiech J."/>
            <person name="Harwood C.R."/>
            <person name="Henaut A."/>
            <person name="Hilbert H."/>
            <person name="Holsappel S."/>
            <person name="Hosono S."/>
            <person name="Hullo M.-F."/>
            <person name="Itaya M."/>
            <person name="Jones L.-M."/>
            <person name="Joris B."/>
            <person name="Karamata D."/>
            <person name="Kasahara Y."/>
            <person name="Klaerr-Blanchard M."/>
            <person name="Klein C."/>
            <person name="Kobayashi Y."/>
            <person name="Koetter P."/>
            <person name="Koningstein G."/>
            <person name="Krogh S."/>
            <person name="Kumano M."/>
            <person name="Kurita K."/>
            <person name="Lapidus A."/>
            <person name="Lardinois S."/>
            <person name="Lauber J."/>
            <person name="Lazarevic V."/>
            <person name="Lee S.-M."/>
            <person name="Levine A."/>
            <person name="Liu H."/>
            <person name="Masuda S."/>
            <person name="Mauel C."/>
            <person name="Medigue C."/>
            <person name="Medina N."/>
            <person name="Mellado R.P."/>
            <person name="Mizuno M."/>
            <person name="Moestl D."/>
            <person name="Nakai S."/>
            <person name="Noback M."/>
            <person name="Noone D."/>
            <person name="O'Reilly M."/>
            <person name="Ogawa K."/>
            <person name="Ogiwara A."/>
            <person name="Oudega B."/>
            <person name="Park S.-H."/>
            <person name="Parro V."/>
            <person name="Pohl T.M."/>
            <person name="Portetelle D."/>
            <person name="Porwollik S."/>
            <person name="Prescott A.M."/>
            <person name="Presecan E."/>
            <person name="Pujic P."/>
            <person name="Purnelle B."/>
            <person name="Rapoport G."/>
            <person name="Rey M."/>
            <person name="Reynolds S."/>
            <person name="Rieger M."/>
            <person name="Rivolta C."/>
            <person name="Rocha E."/>
            <person name="Roche B."/>
            <person name="Rose M."/>
            <person name="Sadaie Y."/>
            <person name="Sato T."/>
            <person name="Scanlan E."/>
            <person name="Schleich S."/>
            <person name="Schroeter R."/>
            <person name="Scoffone F."/>
            <person name="Sekiguchi J."/>
            <person name="Sekowska A."/>
            <person name="Seror S.J."/>
            <person name="Serror P."/>
            <person name="Shin B.-S."/>
            <person name="Soldo B."/>
            <person name="Sorokin A."/>
            <person name="Tacconi E."/>
            <person name="Takagi T."/>
            <person name="Takahashi H."/>
            <person name="Takemaru K."/>
            <person name="Takeuchi M."/>
            <person name="Tamakoshi A."/>
            <person name="Tanaka T."/>
            <person name="Terpstra P."/>
            <person name="Tognoni A."/>
            <person name="Tosato V."/>
            <person name="Uchiyama S."/>
            <person name="Vandenbol M."/>
            <person name="Vannier F."/>
            <person name="Vassarotti A."/>
            <person name="Viari A."/>
            <person name="Wambutt R."/>
            <person name="Wedler E."/>
            <person name="Wedler H."/>
            <person name="Weitzenegger T."/>
            <person name="Winters P."/>
            <person name="Wipat A."/>
            <person name="Yamamoto H."/>
            <person name="Yamane K."/>
            <person name="Yasumoto K."/>
            <person name="Yata K."/>
            <person name="Yoshida K."/>
            <person name="Yoshikawa H.-F."/>
            <person name="Zumstein E."/>
            <person name="Yoshikawa H."/>
            <person name="Danchin A."/>
        </authorList>
    </citation>
    <scope>NUCLEOTIDE SEQUENCE [LARGE SCALE GENOMIC DNA]</scope>
    <source>
        <strain>168</strain>
    </source>
</reference>
<reference key="3">
    <citation type="journal article" date="2004" name="J. Bacteriol.">
        <title>Bacillus subtilis operon encoding a membrane receptor for bacteriophage SPP1.</title>
        <authorList>
            <person name="Sao-Jose C."/>
            <person name="Baptista C."/>
            <person name="Santos M.A."/>
        </authorList>
    </citation>
    <scope>DISRUPTION PHENOTYPE</scope>
    <source>
        <strain>168</strain>
    </source>
</reference>
<reference key="4">
    <citation type="journal article" date="2013" name="PLoS ONE">
        <title>High levels of DegU-P activate an Esat-6-like secretion system in Bacillus subtilis.</title>
        <authorList>
            <person name="Baptista C."/>
            <person name="Barreto H.C."/>
            <person name="Sao-Jose C."/>
        </authorList>
    </citation>
    <scope>FUNCTION</scope>
    <scope>DISRUPTION PHENOTYPE</scope>
    <source>
        <strain>168</strain>
        <strain>ATCC 6051</strain>
    </source>
</reference>
<reference key="5">
    <citation type="journal article" date="2014" name="PLoS ONE">
        <title>The ESX system in Bacillus subtilis mediates protein secretion.</title>
        <authorList>
            <person name="Huppert L.A."/>
            <person name="Ramsdell T.L."/>
            <person name="Chase M.R."/>
            <person name="Sarracino D.A."/>
            <person name="Fortune S.M."/>
            <person name="Burton B.M."/>
        </authorList>
    </citation>
    <scope>FUNCTION</scope>
    <scope>DISRUPTION PHENOTYPE</scope>
    <source>
        <strain>168 / PY79</strain>
    </source>
</reference>
<reference key="6">
    <citation type="journal article" date="2021" name="PLoS Genet.">
        <title>Diverse LXG toxin and antitoxin systems specifically mediate intraspecies competition in Bacillus subtilis biofilms.</title>
        <authorList>
            <person name="Kobayashi K."/>
        </authorList>
    </citation>
    <scope>FUNCTION</scope>
    <scope>DISRUPTION PHENOTYPE</scope>
    <source>
        <strain>168 / Marburg / ATCC 6051 / DSM 10 / JCM 1465 / NBRC 13719 / NCIMB 3610 / NRRL NRS-744 / VKM B-501</strain>
    </source>
</reference>
<reference evidence="8" key="7">
    <citation type="submission" date="2020-05" db="PDB data bank">
        <title>Central role and structure of the membrane pseudokinase YukC in the antibacterial Bacillus subtilis Type VIIb Secretion System.</title>
        <authorList>
            <person name="Tassinari M."/>
            <person name="Doan T."/>
            <person name="Bellinzoni M."/>
            <person name="Chabalier M."/>
            <person name="Ben-Assaya M."/>
            <person name="Martinez M."/>
            <person name="Gaday Q."/>
            <person name="Alzari P.M."/>
            <person name="Cascales E."/>
            <person name="Fronzes R."/>
            <person name="Gubellini F."/>
        </authorList>
    </citation>
    <scope>X-RAY CRYSTALLOGRAPHY (2.55 ANGSTROMS) OF 1-413</scope>
</reference>
<name>YUKC_BACSU</name>
<organism>
    <name type="scientific">Bacillus subtilis (strain 168)</name>
    <dbReference type="NCBI Taxonomy" id="224308"/>
    <lineage>
        <taxon>Bacteria</taxon>
        <taxon>Bacillati</taxon>
        <taxon>Bacillota</taxon>
        <taxon>Bacilli</taxon>
        <taxon>Bacillales</taxon>
        <taxon>Bacillaceae</taxon>
        <taxon>Bacillus</taxon>
    </lineage>
</organism>
<gene>
    <name type="primary">yukC</name>
    <name type="ordered locus">BSU31890</name>
</gene>
<proteinExistence type="evidence at protein level"/>
<dbReference type="EMBL" id="Z82015">
    <property type="protein sequence ID" value="CAB04771.1"/>
    <property type="molecule type" value="Genomic_DNA"/>
</dbReference>
<dbReference type="EMBL" id="AL009126">
    <property type="protein sequence ID" value="CAB15177.1"/>
    <property type="molecule type" value="Genomic_DNA"/>
</dbReference>
<dbReference type="PIR" id="E70013">
    <property type="entry name" value="E70013"/>
</dbReference>
<dbReference type="RefSeq" id="NP_391067.1">
    <property type="nucleotide sequence ID" value="NC_000964.3"/>
</dbReference>
<dbReference type="PDB" id="6Z0F">
    <property type="method" value="X-ray"/>
    <property type="resolution" value="2.55 A"/>
    <property type="chains" value="A/B=1-413"/>
</dbReference>
<dbReference type="PDBsum" id="6Z0F"/>
<dbReference type="SMR" id="P71070"/>
<dbReference type="FunCoup" id="P71070">
    <property type="interactions" value="8"/>
</dbReference>
<dbReference type="IntAct" id="P71070">
    <property type="interactions" value="1"/>
</dbReference>
<dbReference type="STRING" id="224308.BSU31890"/>
<dbReference type="PaxDb" id="224308-BSU31890"/>
<dbReference type="EnsemblBacteria" id="CAB15177">
    <property type="protein sequence ID" value="CAB15177"/>
    <property type="gene ID" value="BSU_31890"/>
</dbReference>
<dbReference type="GeneID" id="936572"/>
<dbReference type="KEGG" id="bsu:BSU31890"/>
<dbReference type="PATRIC" id="fig|224308.179.peg.3454"/>
<dbReference type="eggNOG" id="COG4499">
    <property type="taxonomic scope" value="Bacteria"/>
</dbReference>
<dbReference type="InParanoid" id="P71070"/>
<dbReference type="OrthoDB" id="4975281at2"/>
<dbReference type="PhylomeDB" id="P71070"/>
<dbReference type="BioCyc" id="BSUB:BSU31890-MONOMER"/>
<dbReference type="Proteomes" id="UP000001570">
    <property type="component" value="Chromosome"/>
</dbReference>
<dbReference type="GO" id="GO:0005886">
    <property type="term" value="C:plasma membrane"/>
    <property type="evidence" value="ECO:0007669"/>
    <property type="project" value="UniProtKB-SubCell"/>
</dbReference>
<dbReference type="Gene3D" id="1.10.510.10">
    <property type="entry name" value="Transferase(Phosphotransferase) domain 1"/>
    <property type="match status" value="1"/>
</dbReference>
<dbReference type="Gene3D" id="1.25.40.680">
    <property type="entry name" value="Type VII secretion system EssB, C-terminal-like domain"/>
    <property type="match status" value="1"/>
</dbReference>
<dbReference type="InterPro" id="IPR018778">
    <property type="entry name" value="T7SS_EssB"/>
</dbReference>
<dbReference type="InterPro" id="IPR042565">
    <property type="entry name" value="T7SS_EssB_C"/>
</dbReference>
<dbReference type="NCBIfam" id="TIGR03926">
    <property type="entry name" value="T7_EssB"/>
    <property type="match status" value="1"/>
</dbReference>
<dbReference type="Pfam" id="PF10140">
    <property type="entry name" value="YukC"/>
    <property type="match status" value="1"/>
</dbReference>
<sequence length="451" mass="52161">MSGEQKSYLENQLEAVAEKTDAGYTFTFQREKIKLLDGLEANVIKDINPFFHKEIDVTDDEVIITIQPPSSYKAFRFMKAKDKKSKWQFAYQLVQAVQQHNLSRLNLIVAPENIVFDKGLTPYFLHYGVKESIPPYERDEERVWQELKAAAALAVDGAFAFEDYLKFNETLTFSAEAKAILDAESYDDLLELIQTHIDELEAKAKTYIHIPRKKWNIQRYIGLGLIVLLVPALIYSMYALFFAQPKHQAIVDSNRAFLNKQYSEVISTLSKYDAESLPESVQYQLATSYVEVENLGSAKTKNIENNLVTLQSDPQHFLYWIDYGRGEYKEAISIGRKLEYNDYIYFALAKYKQQLLSEDTNDEDIQKELDSVNSELEKAQKERQENKQSNSETSLVDTSEEQTQTDEEKQAEEKAAEEKAAAEEKAKKEEQKEKEDEKKETEKKDEKKDDK</sequence>
<accession>P71070</accession>
<accession>Q795L4</accession>
<evidence type="ECO:0000255" key="1"/>
<evidence type="ECO:0000256" key="2">
    <source>
        <dbReference type="SAM" id="MobiDB-lite"/>
    </source>
</evidence>
<evidence type="ECO:0000269" key="3">
    <source>
    </source>
</evidence>
<evidence type="ECO:0000269" key="4">
    <source>
    </source>
</evidence>
<evidence type="ECO:0000269" key="5">
    <source>
    </source>
</evidence>
<evidence type="ECO:0000269" key="6">
    <source>
    </source>
</evidence>
<evidence type="ECO:0000305" key="7"/>
<evidence type="ECO:0007744" key="8">
    <source>
        <dbReference type="PDB" id="6Z0F"/>
    </source>
</evidence>
<evidence type="ECO:0007829" key="9">
    <source>
        <dbReference type="PDB" id="6Z0F"/>
    </source>
</evidence>
<comment type="function">
    <text evidence="4 5 6">Required for YukE secretion. Probable component or regulator of the ESX/ESAT-6-like secretion system (BsEss) (PubMed:23861817, PubMed:24798022). Required to deliver LXG toxins to target cells (PubMed:34280190).</text>
</comment>
<comment type="subcellular location">
    <subcellularLocation>
        <location evidence="7">Cell membrane</location>
        <topology evidence="1">Single-pass membrane protein</topology>
    </subcellularLocation>
</comment>
<comment type="disruption phenotype">
    <text evidence="3 4 5 6">Cells lacking this gene are blocked in YukE secretion (PubMed:23861817, PubMed:24798022). They display an increased bacteriophage SPP1 resistance phenotype (PubMed:15576783). Loss of delivery of LXG toxins to target cells (PubMed:34280190).</text>
</comment>
<comment type="similarity">
    <text evidence="7">Belongs to the EssB family.</text>
</comment>
<keyword id="KW-0002">3D-structure</keyword>
<keyword id="KW-1003">Cell membrane</keyword>
<keyword id="KW-0175">Coiled coil</keyword>
<keyword id="KW-0472">Membrane</keyword>
<keyword id="KW-1185">Reference proteome</keyword>
<keyword id="KW-0812">Transmembrane</keyword>
<keyword id="KW-1133">Transmembrane helix</keyword>
<feature type="chain" id="PRO_0000383634" description="ESX secretion system protein YukC">
    <location>
        <begin position="1"/>
        <end position="451"/>
    </location>
</feature>
<feature type="transmembrane region" description="Helical" evidence="1">
    <location>
        <begin position="221"/>
        <end position="241"/>
    </location>
</feature>
<feature type="region of interest" description="Disordered" evidence="2">
    <location>
        <begin position="376"/>
        <end position="451"/>
    </location>
</feature>
<feature type="coiled-coil region" evidence="1">
    <location>
        <begin position="362"/>
        <end position="447"/>
    </location>
</feature>
<feature type="compositionally biased region" description="Basic and acidic residues" evidence="2">
    <location>
        <begin position="376"/>
        <end position="386"/>
    </location>
</feature>
<feature type="compositionally biased region" description="Polar residues" evidence="2">
    <location>
        <begin position="387"/>
        <end position="397"/>
    </location>
</feature>
<feature type="compositionally biased region" description="Basic and acidic residues" evidence="2">
    <location>
        <begin position="406"/>
        <end position="451"/>
    </location>
</feature>
<feature type="helix" evidence="9">
    <location>
        <begin position="8"/>
        <end position="13"/>
    </location>
</feature>
<feature type="strand" evidence="9">
    <location>
        <begin position="16"/>
        <end position="20"/>
    </location>
</feature>
<feature type="strand" evidence="9">
    <location>
        <begin position="23"/>
        <end position="29"/>
    </location>
</feature>
<feature type="helix" evidence="9">
    <location>
        <begin position="30"/>
        <end position="32"/>
    </location>
</feature>
<feature type="strand" evidence="9">
    <location>
        <begin position="37"/>
        <end position="41"/>
    </location>
</feature>
<feature type="helix" evidence="9">
    <location>
        <begin position="42"/>
        <end position="46"/>
    </location>
</feature>
<feature type="strand" evidence="9">
    <location>
        <begin position="51"/>
        <end position="57"/>
    </location>
</feature>
<feature type="strand" evidence="9">
    <location>
        <begin position="59"/>
        <end position="67"/>
    </location>
</feature>
<feature type="helix" evidence="9">
    <location>
        <begin position="75"/>
        <end position="77"/>
    </location>
</feature>
<feature type="helix" evidence="9">
    <location>
        <begin position="83"/>
        <end position="98"/>
    </location>
</feature>
<feature type="helix" evidence="9">
    <location>
        <begin position="111"/>
        <end position="113"/>
    </location>
</feature>
<feature type="strand" evidence="9">
    <location>
        <begin position="114"/>
        <end position="116"/>
    </location>
</feature>
<feature type="strand" evidence="9">
    <location>
        <begin position="122"/>
        <end position="125"/>
    </location>
</feature>
<feature type="turn" evidence="9">
    <location>
        <begin position="130"/>
        <end position="132"/>
    </location>
</feature>
<feature type="strand" evidence="9">
    <location>
        <begin position="133"/>
        <end position="135"/>
    </location>
</feature>
<feature type="helix" evidence="9">
    <location>
        <begin position="140"/>
        <end position="155"/>
    </location>
</feature>
<feature type="helix" evidence="9">
    <location>
        <begin position="161"/>
        <end position="165"/>
    </location>
</feature>
<feature type="strand" evidence="9">
    <location>
        <begin position="169"/>
        <end position="171"/>
    </location>
</feature>
<feature type="helix" evidence="9">
    <location>
        <begin position="175"/>
        <end position="181"/>
    </location>
</feature>
<feature type="helix" evidence="9">
    <location>
        <begin position="186"/>
        <end position="205"/>
    </location>
</feature>
<feature type="strand" evidence="9">
    <location>
        <begin position="207"/>
        <end position="211"/>
    </location>
</feature>
<feature type="helix" evidence="9">
    <location>
        <begin position="212"/>
        <end position="241"/>
    </location>
</feature>
<feature type="helix" evidence="9">
    <location>
        <begin position="243"/>
        <end position="258"/>
    </location>
</feature>
<feature type="helix" evidence="9">
    <location>
        <begin position="262"/>
        <end position="268"/>
    </location>
</feature>
<feature type="turn" evidence="9">
    <location>
        <begin position="269"/>
        <end position="271"/>
    </location>
</feature>
<feature type="helix" evidence="9">
    <location>
        <begin position="274"/>
        <end position="276"/>
    </location>
</feature>
<feature type="helix" evidence="9">
    <location>
        <begin position="279"/>
        <end position="293"/>
    </location>
</feature>
<feature type="helix" evidence="9">
    <location>
        <begin position="297"/>
        <end position="306"/>
    </location>
</feature>
<feature type="helix" evidence="9">
    <location>
        <begin position="314"/>
        <end position="324"/>
    </location>
</feature>
<feature type="helix" evidence="9">
    <location>
        <begin position="328"/>
        <end position="337"/>
    </location>
</feature>
<feature type="helix" evidence="9">
    <location>
        <begin position="341"/>
        <end position="357"/>
    </location>
</feature>
<feature type="helix" evidence="9">
    <location>
        <begin position="363"/>
        <end position="383"/>
    </location>
</feature>
<protein>
    <recommendedName>
        <fullName evidence="7">ESX secretion system protein YukC</fullName>
    </recommendedName>
</protein>